<organism>
    <name type="scientific">Ctenus ornatus</name>
    <name type="common">Brazilian spider</name>
    <name type="synonym">Oligoctenus ornatus</name>
    <dbReference type="NCBI Taxonomy" id="406443"/>
    <lineage>
        <taxon>Eukaryota</taxon>
        <taxon>Metazoa</taxon>
        <taxon>Ecdysozoa</taxon>
        <taxon>Arthropoda</taxon>
        <taxon>Chelicerata</taxon>
        <taxon>Arachnida</taxon>
        <taxon>Araneae</taxon>
        <taxon>Araneomorphae</taxon>
        <taxon>Entelegynae</taxon>
        <taxon>Lycosoidea</taxon>
        <taxon>Ctenidae</taxon>
        <taxon>Oligoctenus</taxon>
    </lineage>
</organism>
<reference evidence="7" key="1">
    <citation type="submission" date="2007-07" db="UniProtKB">
        <authorList>
            <person name="Borges M.H."/>
            <person name="Oliveira C.F.B."/>
            <person name="Goncalves J.M."/>
            <person name="Rates B."/>
            <person name="Santos D.M."/>
            <person name="Pimenta A.M.C."/>
            <person name="Cordeiro M.N."/>
            <person name="Richardson M."/>
        </authorList>
    </citation>
    <scope>PROTEIN SEQUENCE</scope>
    <scope>SUBCELLULAR LOCATION</scope>
    <scope>MASS SPECTROMETRY</scope>
    <source>
        <tissue>Venom</tissue>
    </source>
</reference>
<feature type="chain" id="PRO_0000302118" description="U3-ctenitoxin-Co1a">
    <location>
        <begin position="1"/>
        <end position="23" status="greater than"/>
    </location>
</feature>
<feature type="disulfide bond" evidence="2">
    <location>
        <begin position="2"/>
        <end position="17"/>
    </location>
</feature>
<feature type="disulfide bond" evidence="2">
    <location>
        <begin position="9"/>
        <end position="22"/>
    </location>
</feature>
<feature type="disulfide bond" evidence="2">
    <location>
        <begin position="16"/>
        <end status="unknown"/>
    </location>
</feature>
<feature type="non-terminal residue">
    <location>
        <position position="23"/>
    </location>
</feature>
<dbReference type="ArachnoServer" id="AS000312">
    <property type="toxin name" value="U3-ctenitoxin-Co1a"/>
</dbReference>
<dbReference type="GO" id="GO:0005576">
    <property type="term" value="C:extracellular region"/>
    <property type="evidence" value="ECO:0007669"/>
    <property type="project" value="UniProtKB-SubCell"/>
</dbReference>
<dbReference type="GO" id="GO:0005246">
    <property type="term" value="F:calcium channel regulator activity"/>
    <property type="evidence" value="ECO:0007669"/>
    <property type="project" value="UniProtKB-KW"/>
</dbReference>
<dbReference type="GO" id="GO:0008200">
    <property type="term" value="F:ion channel inhibitor activity"/>
    <property type="evidence" value="ECO:0007669"/>
    <property type="project" value="InterPro"/>
</dbReference>
<dbReference type="GO" id="GO:0090729">
    <property type="term" value="F:toxin activity"/>
    <property type="evidence" value="ECO:0007669"/>
    <property type="project" value="UniProtKB-KW"/>
</dbReference>
<dbReference type="InterPro" id="IPR004169">
    <property type="entry name" value="Spidertoxin"/>
</dbReference>
<dbReference type="Pfam" id="PF02819">
    <property type="entry name" value="Toxin_9"/>
    <property type="match status" value="1"/>
</dbReference>
<dbReference type="SUPFAM" id="SSF57059">
    <property type="entry name" value="omega toxin-like"/>
    <property type="match status" value="1"/>
</dbReference>
<keyword id="KW-0108">Calcium channel impairing toxin</keyword>
<keyword id="KW-0903">Direct protein sequencing</keyword>
<keyword id="KW-1015">Disulfide bond</keyword>
<keyword id="KW-0872">Ion channel impairing toxin</keyword>
<keyword id="KW-0960">Knottin</keyword>
<keyword id="KW-0528">Neurotoxin</keyword>
<keyword id="KW-0964">Secreted</keyword>
<keyword id="KW-0800">Toxin</keyword>
<keyword id="KW-1218">Voltage-gated calcium channel impairing toxin</keyword>
<proteinExistence type="evidence at protein level"/>
<sequence>ACVPVYEECGTPKKRCCEERPCK</sequence>
<name>TX21A_CTEON</name>
<protein>
    <recommendedName>
        <fullName evidence="7">U3-ctenitoxin-Co1a</fullName>
        <shortName evidence="7">U3-CNTX-Co1a</shortName>
    </recommendedName>
    <alternativeName>
        <fullName evidence="6">Neurotoxin Oc F29-9</fullName>
    </alternativeName>
</protein>
<comment type="function">
    <text evidence="1">Antagonist of L-type calcium channels (Cav1/CACNA1).</text>
</comment>
<comment type="subcellular location">
    <subcellularLocation>
        <location evidence="5">Secreted</location>
    </subcellularLocation>
</comment>
<comment type="tissue specificity">
    <text evidence="8">Expressed by the venom gland.</text>
</comment>
<comment type="domain">
    <text evidence="3">The presence of a 'disulfide through disulfide knot' structurally defines this protein as a knottin.</text>
</comment>
<comment type="mass spectrometry"/>
<comment type="similarity">
    <text evidence="4">Belongs to the neurotoxin 02 (plectoxin) family. 01 (Tx3) subfamily.</text>
</comment>
<evidence type="ECO:0000250" key="1"/>
<evidence type="ECO:0000250" key="2">
    <source>
        <dbReference type="UniProtKB" id="O76200"/>
    </source>
</evidence>
<evidence type="ECO:0000250" key="3">
    <source>
        <dbReference type="UniProtKB" id="P30288"/>
    </source>
</evidence>
<evidence type="ECO:0000255" key="4"/>
<evidence type="ECO:0000269" key="5">
    <source ref="1"/>
</evidence>
<evidence type="ECO:0000303" key="6">
    <source ref="1"/>
</evidence>
<evidence type="ECO:0000305" key="7"/>
<evidence type="ECO:0000305" key="8">
    <source ref="1"/>
</evidence>
<accession>P85270</accession>